<gene>
    <name evidence="1" type="primary">tolB</name>
    <name type="ordered locus">IL1080</name>
</gene>
<feature type="signal peptide" evidence="1">
    <location>
        <begin position="1"/>
        <end position="21"/>
    </location>
</feature>
<feature type="chain" id="PRO_0000034660" description="Tol-Pal system protein TolB" evidence="1">
    <location>
        <begin position="22"/>
        <end position="449"/>
    </location>
</feature>
<comment type="function">
    <text evidence="1">Part of the Tol-Pal system, which plays a role in outer membrane invagination during cell division and is important for maintaining outer membrane integrity.</text>
</comment>
<comment type="subunit">
    <text evidence="1">The Tol-Pal system is composed of five core proteins: the inner membrane proteins TolA, TolQ and TolR, the periplasmic protein TolB and the outer membrane protein Pal. They form a network linking the inner and outer membranes and the peptidoglycan layer.</text>
</comment>
<comment type="subcellular location">
    <subcellularLocation>
        <location evidence="1">Periplasm</location>
    </subcellularLocation>
</comment>
<comment type="similarity">
    <text evidence="1">Belongs to the TolB family.</text>
</comment>
<name>TOLB_IDILO</name>
<reference key="1">
    <citation type="journal article" date="2004" name="Proc. Natl. Acad. Sci. U.S.A.">
        <title>Genome sequence of the deep-sea gamma-proteobacterium Idiomarina loihiensis reveals amino acid fermentation as a source of carbon and energy.</title>
        <authorList>
            <person name="Hou S."/>
            <person name="Saw J.H."/>
            <person name="Lee K.S."/>
            <person name="Freitas T.A."/>
            <person name="Belisle C."/>
            <person name="Kawarabayasi Y."/>
            <person name="Donachie S.P."/>
            <person name="Pikina A."/>
            <person name="Galperin M.Y."/>
            <person name="Koonin E.V."/>
            <person name="Makarova K.S."/>
            <person name="Omelchenko M.V."/>
            <person name="Sorokin A."/>
            <person name="Wolf Y.I."/>
            <person name="Li Q.X."/>
            <person name="Keum Y.S."/>
            <person name="Campbell S."/>
            <person name="Denery J."/>
            <person name="Aizawa S."/>
            <person name="Shibata S."/>
            <person name="Malahoff A."/>
            <person name="Alam M."/>
        </authorList>
    </citation>
    <scope>NUCLEOTIDE SEQUENCE [LARGE SCALE GENOMIC DNA]</scope>
    <source>
        <strain>ATCC BAA-735 / DSM 15497 / L2-TR</strain>
    </source>
</reference>
<proteinExistence type="inferred from homology"/>
<keyword id="KW-0131">Cell cycle</keyword>
<keyword id="KW-0132">Cell division</keyword>
<keyword id="KW-0574">Periplasm</keyword>
<keyword id="KW-1185">Reference proteome</keyword>
<keyword id="KW-0732">Signal</keyword>
<sequence length="449" mass="49780">MKNILIRSILLFVALTAFVRAGVLEIVITEGIDTARPIAVVPFQWKGEGKAPNELTDVIAADLMRSGKFNPIPVSAMPQRPAADDEIDYSAWAKMGVEAILVGSIEPYSVDRYMVKFEVIDVLRGQITGGNSQMLRNGELVQSNDHVLDSRSSVIDGDQFRSYAHRISDVAYEALTGERGAFMTKIAYVTVNHDDRYPYKLAVADYDGANEKILLRSPEPLMSPAWSPDGNKLAYVSFENKTAEIFMQDIYTTRREKLTSFPGINGNPVFSPDGKKLAMVLSKDGNPELYVFDIKTKDLQRVTRNRTIDTEPNWTPDGESLVFTSERGGRPQLYSVNLSSGQVRRLTFDGEQNLGGTLVPSGEDMILVNRTRGNYHIAKQEFPRGNMQVLTKTSLDESPSVAPNGSMVIYSTTHNNKQVLALVSIDGRFKARLPATDGEIKSPAWSPFM</sequence>
<evidence type="ECO:0000255" key="1">
    <source>
        <dbReference type="HAMAP-Rule" id="MF_00671"/>
    </source>
</evidence>
<organism>
    <name type="scientific">Idiomarina loihiensis (strain ATCC BAA-735 / DSM 15497 / L2-TR)</name>
    <dbReference type="NCBI Taxonomy" id="283942"/>
    <lineage>
        <taxon>Bacteria</taxon>
        <taxon>Pseudomonadati</taxon>
        <taxon>Pseudomonadota</taxon>
        <taxon>Gammaproteobacteria</taxon>
        <taxon>Alteromonadales</taxon>
        <taxon>Idiomarinaceae</taxon>
        <taxon>Idiomarina</taxon>
    </lineage>
</organism>
<accession>Q5QYU0</accession>
<dbReference type="EMBL" id="AE017340">
    <property type="protein sequence ID" value="AAV81920.1"/>
    <property type="molecule type" value="Genomic_DNA"/>
</dbReference>
<dbReference type="RefSeq" id="WP_011234331.1">
    <property type="nucleotide sequence ID" value="NC_006512.1"/>
</dbReference>
<dbReference type="SMR" id="Q5QYU0"/>
<dbReference type="STRING" id="283942.IL1080"/>
<dbReference type="GeneID" id="41336248"/>
<dbReference type="KEGG" id="ilo:IL1080"/>
<dbReference type="eggNOG" id="COG0823">
    <property type="taxonomic scope" value="Bacteria"/>
</dbReference>
<dbReference type="HOGENOM" id="CLU_047123_0_0_6"/>
<dbReference type="OrthoDB" id="9802240at2"/>
<dbReference type="Proteomes" id="UP000001171">
    <property type="component" value="Chromosome"/>
</dbReference>
<dbReference type="GO" id="GO:0042597">
    <property type="term" value="C:periplasmic space"/>
    <property type="evidence" value="ECO:0007669"/>
    <property type="project" value="UniProtKB-SubCell"/>
</dbReference>
<dbReference type="GO" id="GO:0051301">
    <property type="term" value="P:cell division"/>
    <property type="evidence" value="ECO:0007669"/>
    <property type="project" value="UniProtKB-UniRule"/>
</dbReference>
<dbReference type="GO" id="GO:0017038">
    <property type="term" value="P:protein import"/>
    <property type="evidence" value="ECO:0007669"/>
    <property type="project" value="InterPro"/>
</dbReference>
<dbReference type="Gene3D" id="2.120.10.30">
    <property type="entry name" value="TolB, C-terminal domain"/>
    <property type="match status" value="1"/>
</dbReference>
<dbReference type="Gene3D" id="3.40.50.10070">
    <property type="entry name" value="TolB, N-terminal domain"/>
    <property type="match status" value="1"/>
</dbReference>
<dbReference type="HAMAP" id="MF_00671">
    <property type="entry name" value="TolB"/>
    <property type="match status" value="1"/>
</dbReference>
<dbReference type="InterPro" id="IPR011042">
    <property type="entry name" value="6-blade_b-propeller_TolB-like"/>
</dbReference>
<dbReference type="InterPro" id="IPR011659">
    <property type="entry name" value="PD40"/>
</dbReference>
<dbReference type="InterPro" id="IPR014167">
    <property type="entry name" value="Tol-Pal_TolB"/>
</dbReference>
<dbReference type="InterPro" id="IPR007195">
    <property type="entry name" value="TolB_N"/>
</dbReference>
<dbReference type="NCBIfam" id="TIGR02800">
    <property type="entry name" value="propeller_TolB"/>
    <property type="match status" value="1"/>
</dbReference>
<dbReference type="PANTHER" id="PTHR36842:SF1">
    <property type="entry name" value="PROTEIN TOLB"/>
    <property type="match status" value="1"/>
</dbReference>
<dbReference type="PANTHER" id="PTHR36842">
    <property type="entry name" value="PROTEIN TOLB HOMOLOG"/>
    <property type="match status" value="1"/>
</dbReference>
<dbReference type="Pfam" id="PF07676">
    <property type="entry name" value="PD40"/>
    <property type="match status" value="4"/>
</dbReference>
<dbReference type="Pfam" id="PF04052">
    <property type="entry name" value="TolB_N"/>
    <property type="match status" value="1"/>
</dbReference>
<dbReference type="SUPFAM" id="SSF52964">
    <property type="entry name" value="TolB, N-terminal domain"/>
    <property type="match status" value="1"/>
</dbReference>
<dbReference type="SUPFAM" id="SSF69304">
    <property type="entry name" value="Tricorn protease N-terminal domain"/>
    <property type="match status" value="1"/>
</dbReference>
<protein>
    <recommendedName>
        <fullName evidence="1">Tol-Pal system protein TolB</fullName>
    </recommendedName>
</protein>